<sequence>MVKSSLQRILNSHCFAREKEGDKRSATLHASRTMPLLSQHSRGGCSSESSRAALHCCSNLGPGPRWCSYVPHPPLKIPGGRGNSQRDHSLSASVLYSDERLNVTEEPTANDKTRVLSIQSRLTEAKQVTWRAVWNGGGLYIELPAGPSPEGSKDSFAALLEFAEEQLQADHVFICFPKNREDRAALLRTFSFLGFEIVRPGHPLVPKRPDACFMVYTLERED</sequence>
<proteinExistence type="evidence at transcript level"/>
<organism>
    <name type="scientific">Mesocricetus auratus</name>
    <name type="common">Golden hamster</name>
    <dbReference type="NCBI Taxonomy" id="10036"/>
    <lineage>
        <taxon>Eukaryota</taxon>
        <taxon>Metazoa</taxon>
        <taxon>Chordata</taxon>
        <taxon>Craniata</taxon>
        <taxon>Vertebrata</taxon>
        <taxon>Euteleostomi</taxon>
        <taxon>Mammalia</taxon>
        <taxon>Eutheria</taxon>
        <taxon>Euarchontoglires</taxon>
        <taxon>Glires</taxon>
        <taxon>Rodentia</taxon>
        <taxon>Myomorpha</taxon>
        <taxon>Muroidea</taxon>
        <taxon>Cricetidae</taxon>
        <taxon>Cricetinae</taxon>
        <taxon>Mesocricetus</taxon>
    </lineage>
</organism>
<keyword id="KW-0620">Polyamine biosynthesis</keyword>
<keyword id="KW-1185">Reference proteome</keyword>
<keyword id="KW-0688">Ribosomal frameshifting</keyword>
<keyword id="KW-0813">Transport</keyword>
<name>OAZ1_MESAU</name>
<protein>
    <recommendedName>
        <fullName>Ornithine decarboxylase antizyme 1</fullName>
        <shortName>ODC-Az</shortName>
    </recommendedName>
</protein>
<evidence type="ECO:0000250" key="1">
    <source>
        <dbReference type="UniProtKB" id="P54368"/>
    </source>
</evidence>
<evidence type="ECO:0000305" key="2"/>
<accession>P70112</accession>
<dbReference type="EMBL" id="U58672">
    <property type="protein sequence ID" value="AAB07365.1"/>
    <property type="molecule type" value="mRNA"/>
</dbReference>
<dbReference type="RefSeq" id="NP_001268250.2">
    <property type="nucleotide sequence ID" value="NM_001281321.2"/>
</dbReference>
<dbReference type="SMR" id="P70112"/>
<dbReference type="STRING" id="10036.ENSMAUP00000010242"/>
<dbReference type="GeneID" id="101826304"/>
<dbReference type="KEGG" id="maua:101826304"/>
<dbReference type="CTD" id="4946"/>
<dbReference type="eggNOG" id="KOG4387">
    <property type="taxonomic scope" value="Eukaryota"/>
</dbReference>
<dbReference type="OrthoDB" id="5959761at2759"/>
<dbReference type="Proteomes" id="UP000189706">
    <property type="component" value="Unplaced"/>
</dbReference>
<dbReference type="GO" id="GO:0005737">
    <property type="term" value="C:cytoplasm"/>
    <property type="evidence" value="ECO:0007669"/>
    <property type="project" value="TreeGrafter"/>
</dbReference>
<dbReference type="GO" id="GO:0005634">
    <property type="term" value="C:nucleus"/>
    <property type="evidence" value="ECO:0007669"/>
    <property type="project" value="TreeGrafter"/>
</dbReference>
<dbReference type="GO" id="GO:0008073">
    <property type="term" value="F:ornithine decarboxylase inhibitor activity"/>
    <property type="evidence" value="ECO:0000250"/>
    <property type="project" value="UniProtKB"/>
</dbReference>
<dbReference type="GO" id="GO:0006596">
    <property type="term" value="P:polyamine biosynthetic process"/>
    <property type="evidence" value="ECO:0007669"/>
    <property type="project" value="UniProtKB-KW"/>
</dbReference>
<dbReference type="GO" id="GO:0090316">
    <property type="term" value="P:positive regulation of intracellular protein transport"/>
    <property type="evidence" value="ECO:0000250"/>
    <property type="project" value="UniProtKB"/>
</dbReference>
<dbReference type="GO" id="GO:0045732">
    <property type="term" value="P:positive regulation of protein catabolic process"/>
    <property type="evidence" value="ECO:0000250"/>
    <property type="project" value="UniProtKB"/>
</dbReference>
<dbReference type="GO" id="GO:0075523">
    <property type="term" value="P:viral translational frameshifting"/>
    <property type="evidence" value="ECO:0007669"/>
    <property type="project" value="UniProtKB-KW"/>
</dbReference>
<dbReference type="FunFam" id="3.40.630.60:FF:000001">
    <property type="entry name" value="Ornithine decarboxylase antizyme 1"/>
    <property type="match status" value="1"/>
</dbReference>
<dbReference type="Gene3D" id="3.40.630.60">
    <property type="match status" value="1"/>
</dbReference>
<dbReference type="InterPro" id="IPR016181">
    <property type="entry name" value="Acyl_CoA_acyltransferase"/>
</dbReference>
<dbReference type="InterPro" id="IPR002993">
    <property type="entry name" value="ODC_AZ"/>
</dbReference>
<dbReference type="InterPro" id="IPR038581">
    <property type="entry name" value="ODC_AZ_sf"/>
</dbReference>
<dbReference type="PANTHER" id="PTHR10279">
    <property type="entry name" value="ORNITHINE DECARBOXYLASE ANTIZYME"/>
    <property type="match status" value="1"/>
</dbReference>
<dbReference type="PANTHER" id="PTHR10279:SF8">
    <property type="entry name" value="ORNITHINE DECARBOXYLASE ANTIZYME 1"/>
    <property type="match status" value="1"/>
</dbReference>
<dbReference type="Pfam" id="PF02100">
    <property type="entry name" value="ODC_AZ"/>
    <property type="match status" value="1"/>
</dbReference>
<dbReference type="SUPFAM" id="SSF55729">
    <property type="entry name" value="Acyl-CoA N-acyltransferases (Nat)"/>
    <property type="match status" value="1"/>
</dbReference>
<dbReference type="PROSITE" id="PS01337">
    <property type="entry name" value="ODC_AZ"/>
    <property type="match status" value="1"/>
</dbReference>
<comment type="function">
    <text evidence="1">Ornithine decarboxylase (ODC) antizyme protein that negatively regulates ODC activity and intracellular polyamine biosynthesis and uptake in response to increased intracellular polyamine levels. Binds to ODC monomers, inhibiting the assembly of the functional ODC homodimer, and targets the monomers for ubiquitin-independent proteolytic destruction by the 26S proteasome. Triggers ODC degradation by inducing the exposure of a cryptic proteasome-interacting surface of ODC. Stabilizes AZIN2 by interfering with its ubiquitination. Also inhibits cellular uptake of polyamines by inactivating the polyamine uptake transporter. SMAD1/OAZ1/PSMB4 complex mediates the degradation of the CREBBP/EP300 repressor SNIP1. Involved in the translocation of AZIN2 from ER-Golgi intermediate compartment (ERGIC) to the cytosol.</text>
</comment>
<comment type="subunit">
    <text evidence="1">Interacts with ODC1 and thereby sterically blocks ODC homodimerization. Forms a ternary complex with PSMB4 and OAZ1 before PSMB4 is incorporated into the 20S proteasome. Interacts with AZIN2; this interaction disrupts the interaction between the antizyme and ODC1. Interacts with FAM171A1 (By similarity).</text>
</comment>
<comment type="alternative products">
    <event type="ribosomal frameshifting"/>
    <isoform>
        <id>P70112-1</id>
        <name>1</name>
        <sequence type="displayed"/>
    </isoform>
    <text>A ribosomal frameshift occurs between the codons for Ser-68 and Tyr-69. An autoregulatory mechanism enables modulation of frameshifting according to the cellular concentration of polyamines.</text>
</comment>
<comment type="similarity">
    <text evidence="2">Belongs to the ODC antizyme family.</text>
</comment>
<gene>
    <name type="primary">OAZ1</name>
    <name type="synonym">OAZ</name>
</gene>
<reference key="1">
    <citation type="journal article" date="1998" name="Oncogene">
        <title>Reduction of ornithine decarboxylase antizyme (ODC-Az) level in the 7,12-dimethylbenz(a)anthracene-induced hamster buccal pouch carcinogenesis model.</title>
        <authorList>
            <person name="Tsuji T."/>
            <person name="Todd R."/>
            <person name="Meyer C."/>
            <person name="McBride J."/>
            <person name="Liao P.H."/>
            <person name="Huang M.F."/>
            <person name="Chou M.Y."/>
            <person name="Donoff R.B."/>
            <person name="Wong D.T."/>
        </authorList>
    </citation>
    <scope>NUCLEOTIDE SEQUENCE [MRNA]</scope>
</reference>
<feature type="chain" id="PRO_0000220850" description="Ornithine decarboxylase antizyme 1">
    <location>
        <begin position="1"/>
        <end position="222"/>
    </location>
</feature>